<proteinExistence type="inferred from homology"/>
<protein>
    <recommendedName>
        <fullName evidence="1">Imidazole glycerol phosphate synthase subunit HisH</fullName>
        <ecNumber evidence="1">4.3.2.10</ecNumber>
    </recommendedName>
    <alternativeName>
        <fullName evidence="1">IGP synthase glutaminase subunit</fullName>
        <ecNumber evidence="1">3.5.1.2</ecNumber>
    </alternativeName>
    <alternativeName>
        <fullName evidence="1">IGP synthase subunit HisH</fullName>
    </alternativeName>
    <alternativeName>
        <fullName evidence="1">ImGP synthase subunit HisH</fullName>
        <shortName evidence="1">IGPS subunit HisH</shortName>
    </alternativeName>
</protein>
<organism>
    <name type="scientific">Corynebacterium diphtheriae (strain ATCC 700971 / NCTC 13129 / Biotype gravis)</name>
    <dbReference type="NCBI Taxonomy" id="257309"/>
    <lineage>
        <taxon>Bacteria</taxon>
        <taxon>Bacillati</taxon>
        <taxon>Actinomycetota</taxon>
        <taxon>Actinomycetes</taxon>
        <taxon>Mycobacteriales</taxon>
        <taxon>Corynebacteriaceae</taxon>
        <taxon>Corynebacterium</taxon>
    </lineage>
</organism>
<name>HIS5_CORDI</name>
<gene>
    <name evidence="1" type="primary">hisH</name>
    <name type="ordered locus">DIP1561</name>
</gene>
<reference key="1">
    <citation type="journal article" date="2003" name="Nucleic Acids Res.">
        <title>The complete genome sequence and analysis of Corynebacterium diphtheriae NCTC13129.</title>
        <authorList>
            <person name="Cerdeno-Tarraga A.-M."/>
            <person name="Efstratiou A."/>
            <person name="Dover L.G."/>
            <person name="Holden M.T.G."/>
            <person name="Pallen M.J."/>
            <person name="Bentley S.D."/>
            <person name="Besra G.S."/>
            <person name="Churcher C.M."/>
            <person name="James K.D."/>
            <person name="De Zoysa A."/>
            <person name="Chillingworth T."/>
            <person name="Cronin A."/>
            <person name="Dowd L."/>
            <person name="Feltwell T."/>
            <person name="Hamlin N."/>
            <person name="Holroyd S."/>
            <person name="Jagels K."/>
            <person name="Moule S."/>
            <person name="Quail M.A."/>
            <person name="Rabbinowitsch E."/>
            <person name="Rutherford K.M."/>
            <person name="Thomson N.R."/>
            <person name="Unwin L."/>
            <person name="Whitehead S."/>
            <person name="Barrell B.G."/>
            <person name="Parkhill J."/>
        </authorList>
    </citation>
    <scope>NUCLEOTIDE SEQUENCE [LARGE SCALE GENOMIC DNA]</scope>
    <source>
        <strain>ATCC 700971 / NCTC 13129 / Biotype gravis</strain>
    </source>
</reference>
<dbReference type="EC" id="4.3.2.10" evidence="1"/>
<dbReference type="EC" id="3.5.1.2" evidence="1"/>
<dbReference type="EMBL" id="BX248358">
    <property type="protein sequence ID" value="CAE50086.1"/>
    <property type="molecule type" value="Genomic_DNA"/>
</dbReference>
<dbReference type="RefSeq" id="WP_003852075.1">
    <property type="nucleotide sequence ID" value="NC_002935.2"/>
</dbReference>
<dbReference type="SMR" id="P60598"/>
<dbReference type="STRING" id="257309.DIP1561"/>
<dbReference type="KEGG" id="cdi:DIP1561"/>
<dbReference type="HOGENOM" id="CLU_071837_1_0_11"/>
<dbReference type="UniPathway" id="UPA00031">
    <property type="reaction ID" value="UER00010"/>
</dbReference>
<dbReference type="Proteomes" id="UP000002198">
    <property type="component" value="Chromosome"/>
</dbReference>
<dbReference type="GO" id="GO:0005737">
    <property type="term" value="C:cytoplasm"/>
    <property type="evidence" value="ECO:0007669"/>
    <property type="project" value="UniProtKB-SubCell"/>
</dbReference>
<dbReference type="GO" id="GO:0004359">
    <property type="term" value="F:glutaminase activity"/>
    <property type="evidence" value="ECO:0007669"/>
    <property type="project" value="UniProtKB-EC"/>
</dbReference>
<dbReference type="GO" id="GO:0000107">
    <property type="term" value="F:imidazoleglycerol-phosphate synthase activity"/>
    <property type="evidence" value="ECO:0007669"/>
    <property type="project" value="UniProtKB-UniRule"/>
</dbReference>
<dbReference type="GO" id="GO:0016829">
    <property type="term" value="F:lyase activity"/>
    <property type="evidence" value="ECO:0007669"/>
    <property type="project" value="UniProtKB-KW"/>
</dbReference>
<dbReference type="GO" id="GO:0000105">
    <property type="term" value="P:L-histidine biosynthetic process"/>
    <property type="evidence" value="ECO:0007669"/>
    <property type="project" value="UniProtKB-UniRule"/>
</dbReference>
<dbReference type="CDD" id="cd01748">
    <property type="entry name" value="GATase1_IGP_Synthase"/>
    <property type="match status" value="1"/>
</dbReference>
<dbReference type="FunFam" id="3.40.50.880:FF:000056">
    <property type="entry name" value="Imidazole glycerol phosphate synthase subunit HisH"/>
    <property type="match status" value="1"/>
</dbReference>
<dbReference type="Gene3D" id="3.40.50.880">
    <property type="match status" value="1"/>
</dbReference>
<dbReference type="HAMAP" id="MF_00278">
    <property type="entry name" value="HisH"/>
    <property type="match status" value="1"/>
</dbReference>
<dbReference type="InterPro" id="IPR029062">
    <property type="entry name" value="Class_I_gatase-like"/>
</dbReference>
<dbReference type="InterPro" id="IPR017926">
    <property type="entry name" value="GATASE"/>
</dbReference>
<dbReference type="InterPro" id="IPR010139">
    <property type="entry name" value="Imidazole-glycPsynth_HisH"/>
</dbReference>
<dbReference type="NCBIfam" id="TIGR01855">
    <property type="entry name" value="IMP_synth_hisH"/>
    <property type="match status" value="1"/>
</dbReference>
<dbReference type="PANTHER" id="PTHR42701">
    <property type="entry name" value="IMIDAZOLE GLYCEROL PHOSPHATE SYNTHASE SUBUNIT HISH"/>
    <property type="match status" value="1"/>
</dbReference>
<dbReference type="PANTHER" id="PTHR42701:SF1">
    <property type="entry name" value="IMIDAZOLE GLYCEROL PHOSPHATE SYNTHASE SUBUNIT HISH"/>
    <property type="match status" value="1"/>
</dbReference>
<dbReference type="Pfam" id="PF00117">
    <property type="entry name" value="GATase"/>
    <property type="match status" value="1"/>
</dbReference>
<dbReference type="PIRSF" id="PIRSF000495">
    <property type="entry name" value="Amidotransf_hisH"/>
    <property type="match status" value="1"/>
</dbReference>
<dbReference type="SUPFAM" id="SSF52317">
    <property type="entry name" value="Class I glutamine amidotransferase-like"/>
    <property type="match status" value="1"/>
</dbReference>
<dbReference type="PROSITE" id="PS51273">
    <property type="entry name" value="GATASE_TYPE_1"/>
    <property type="match status" value="1"/>
</dbReference>
<comment type="function">
    <text evidence="1">IGPS catalyzes the conversion of PRFAR and glutamine to IGP, AICAR and glutamate. The HisH subunit catalyzes the hydrolysis of glutamine to glutamate and ammonia as part of the synthesis of IGP and AICAR. The resulting ammonia molecule is channeled to the active site of HisF.</text>
</comment>
<comment type="catalytic activity">
    <reaction evidence="1">
        <text>5-[(5-phospho-1-deoxy-D-ribulos-1-ylimino)methylamino]-1-(5-phospho-beta-D-ribosyl)imidazole-4-carboxamide + L-glutamine = D-erythro-1-(imidazol-4-yl)glycerol 3-phosphate + 5-amino-1-(5-phospho-beta-D-ribosyl)imidazole-4-carboxamide + L-glutamate + H(+)</text>
        <dbReference type="Rhea" id="RHEA:24793"/>
        <dbReference type="ChEBI" id="CHEBI:15378"/>
        <dbReference type="ChEBI" id="CHEBI:29985"/>
        <dbReference type="ChEBI" id="CHEBI:58278"/>
        <dbReference type="ChEBI" id="CHEBI:58359"/>
        <dbReference type="ChEBI" id="CHEBI:58475"/>
        <dbReference type="ChEBI" id="CHEBI:58525"/>
        <dbReference type="EC" id="4.3.2.10"/>
    </reaction>
</comment>
<comment type="catalytic activity">
    <reaction evidence="1">
        <text>L-glutamine + H2O = L-glutamate + NH4(+)</text>
        <dbReference type="Rhea" id="RHEA:15889"/>
        <dbReference type="ChEBI" id="CHEBI:15377"/>
        <dbReference type="ChEBI" id="CHEBI:28938"/>
        <dbReference type="ChEBI" id="CHEBI:29985"/>
        <dbReference type="ChEBI" id="CHEBI:58359"/>
        <dbReference type="EC" id="3.5.1.2"/>
    </reaction>
</comment>
<comment type="pathway">
    <text evidence="1">Amino-acid biosynthesis; L-histidine biosynthesis; L-histidine from 5-phospho-alpha-D-ribose 1-diphosphate: step 5/9.</text>
</comment>
<comment type="subunit">
    <text evidence="1">Heterodimer of HisH and HisF.</text>
</comment>
<comment type="subcellular location">
    <subcellularLocation>
        <location evidence="1">Cytoplasm</location>
    </subcellularLocation>
</comment>
<evidence type="ECO:0000255" key="1">
    <source>
        <dbReference type="HAMAP-Rule" id="MF_00278"/>
    </source>
</evidence>
<keyword id="KW-0028">Amino-acid biosynthesis</keyword>
<keyword id="KW-0963">Cytoplasm</keyword>
<keyword id="KW-0315">Glutamine amidotransferase</keyword>
<keyword id="KW-0368">Histidine biosynthesis</keyword>
<keyword id="KW-0378">Hydrolase</keyword>
<keyword id="KW-0456">Lyase</keyword>
<keyword id="KW-1185">Reference proteome</keyword>
<feature type="chain" id="PRO_0000152368" description="Imidazole glycerol phosphate synthase subunit HisH">
    <location>
        <begin position="1"/>
        <end position="210"/>
    </location>
</feature>
<feature type="domain" description="Glutamine amidotransferase type-1" evidence="1">
    <location>
        <begin position="3"/>
        <end position="210"/>
    </location>
</feature>
<feature type="active site" description="Nucleophile" evidence="1">
    <location>
        <position position="81"/>
    </location>
</feature>
<feature type="active site" evidence="1">
    <location>
        <position position="191"/>
    </location>
</feature>
<feature type="active site" evidence="1">
    <location>
        <position position="193"/>
    </location>
</feature>
<sequence length="210" mass="22687">MKKVALLDYGSGNLRSAQRALERVGAEVEVTNDPDVVLAADGLLVPGVGAFDACMKGLKAVQGDRMIGQRLAGGRPVMGICVGMQIMFDSGNEHGISAAGCGQWPGNVEKLEARVLPHMGWNTVEAAQDSQLFAGLDADTRFYFVHSYGVRWWEFEGDGLTRAPLVTWAQHESDRFVAAVENGALMATQFHPEKSGDAGAQLLRNWIDLL</sequence>
<accession>P60598</accession>